<reference key="1">
    <citation type="journal article" date="2002" name="Nucleic Acids Res.">
        <title>Identification of HDAC10, a novel class II human histone deacetylase containing a leucine-rich domain.</title>
        <authorList>
            <person name="Tong J.J."/>
            <person name="Liu J."/>
            <person name="Bertos N.R."/>
            <person name="Yang X.-J."/>
        </authorList>
    </citation>
    <scope>NUCLEOTIDE SEQUENCE [MRNA] (ISOFORM 1)</scope>
    <scope>FUNCTION</scope>
    <scope>INTERACTION WITH HDAC3</scope>
    <scope>MUTAGENESIS OF HIS-135</scope>
    <scope>TISSUE SPECIFICITY</scope>
    <scope>INHIBITION BY TSA</scope>
    <scope>SUBCELLULAR LOCATION</scope>
    <source>
        <tissue>Bone marrow</tissue>
    </source>
</reference>
<reference key="2">
    <citation type="journal article" date="2002" name="J. Biol. Chem.">
        <title>Molecular cloning and characterization of a novel histone deacetylase HDAC10.</title>
        <authorList>
            <person name="Guardiola A.R."/>
            <person name="Yao T.-P."/>
        </authorList>
    </citation>
    <scope>NUCLEOTIDE SEQUENCE [MRNA] (ISOFORM 1)</scope>
    <scope>FUNCTION</scope>
    <scope>SUBCELLULAR LOCATION</scope>
    <scope>INHIBITION BY TSA</scope>
    <scope>MUTAGENESIS OF HIS-135</scope>
    <source>
        <tissue>Leukemia</tissue>
    </source>
</reference>
<reference key="3">
    <citation type="journal article" date="2002" name="J. Biol. Chem.">
        <title>Isolation and characterization of mammalian HDAC10, a novel histone deacetylase.</title>
        <authorList>
            <person name="Kao H.-Y."/>
            <person name="Lee C.-H."/>
            <person name="Komarov A."/>
            <person name="Han C.C."/>
            <person name="Evans R.M."/>
        </authorList>
    </citation>
    <scope>NUCLEOTIDE SEQUENCE [MRNA] (ISOFORMS 1 AND 2)</scope>
    <scope>FUNCTION</scope>
    <scope>SUBCELLULAR LOCATION</scope>
    <scope>TISSUE SPECIFICITY</scope>
    <source>
        <tissue>Hepatoma</tissue>
    </source>
</reference>
<reference key="4">
    <citation type="journal article" date="2002" name="J. Biol. Chem.">
        <title>Isolation and characterization of a novel class II histone deacetylase, HDAC10.</title>
        <authorList>
            <person name="Fischer D.D."/>
            <person name="Cai R."/>
            <person name="Bhatia U."/>
            <person name="Asselbergs F.A.M."/>
            <person name="Song C."/>
            <person name="Terry R."/>
            <person name="Trogani N."/>
            <person name="Widmer R."/>
            <person name="Atadja P."/>
            <person name="Cohen D."/>
        </authorList>
    </citation>
    <scope>NUCLEOTIDE SEQUENCE [MRNA] (ISOFORMS 1 AND 4)</scope>
    <scope>FUNCTION</scope>
    <scope>SUBCELLULAR LOCATION</scope>
    <scope>TISSUE SPECIFICITY</scope>
    <scope>INTERACTION WITH HDAC2 AND NCOR2</scope>
</reference>
<reference key="5">
    <citation type="journal article" date="2004" name="Genome Biol.">
        <title>A genome annotation-driven approach to cloning the human ORFeome.</title>
        <authorList>
            <person name="Collins J.E."/>
            <person name="Wright C.L."/>
            <person name="Edwards C.A."/>
            <person name="Davis M.P."/>
            <person name="Grinham J.A."/>
            <person name="Cole C.G."/>
            <person name="Goward M.E."/>
            <person name="Aguado B."/>
            <person name="Mallya M."/>
            <person name="Mokrab Y."/>
            <person name="Huckle E.J."/>
            <person name="Beare D.M."/>
            <person name="Dunham I."/>
        </authorList>
    </citation>
    <scope>NUCLEOTIDE SEQUENCE [LARGE SCALE MRNA] (ISOFORM 1)</scope>
</reference>
<reference key="6">
    <citation type="submission" date="2003-10" db="EMBL/GenBank/DDBJ databases">
        <authorList>
            <person name="Lin L."/>
            <person name="Li H."/>
            <person name="Zhou G."/>
            <person name="Shen C."/>
            <person name="Xiao W."/>
            <person name="Li M."/>
            <person name="Ke R."/>
            <person name="Yang S."/>
        </authorList>
    </citation>
    <scope>NUCLEOTIDE SEQUENCE [LARGE SCALE MRNA] (ISOFORM 5)</scope>
</reference>
<reference key="7">
    <citation type="journal article" date="1999" name="Nature">
        <title>The DNA sequence of human chromosome 22.</title>
        <authorList>
            <person name="Dunham I."/>
            <person name="Hunt A.R."/>
            <person name="Collins J.E."/>
            <person name="Bruskiewich R."/>
            <person name="Beare D.M."/>
            <person name="Clamp M."/>
            <person name="Smink L.J."/>
            <person name="Ainscough R."/>
            <person name="Almeida J.P."/>
            <person name="Babbage A.K."/>
            <person name="Bagguley C."/>
            <person name="Bailey J."/>
            <person name="Barlow K.F."/>
            <person name="Bates K.N."/>
            <person name="Beasley O.P."/>
            <person name="Bird C.P."/>
            <person name="Blakey S.E."/>
            <person name="Bridgeman A.M."/>
            <person name="Buck D."/>
            <person name="Burgess J."/>
            <person name="Burrill W.D."/>
            <person name="Burton J."/>
            <person name="Carder C."/>
            <person name="Carter N.P."/>
            <person name="Chen Y."/>
            <person name="Clark G."/>
            <person name="Clegg S.M."/>
            <person name="Cobley V.E."/>
            <person name="Cole C.G."/>
            <person name="Collier R.E."/>
            <person name="Connor R."/>
            <person name="Conroy D."/>
            <person name="Corby N.R."/>
            <person name="Coville G.J."/>
            <person name="Cox A.V."/>
            <person name="Davis J."/>
            <person name="Dawson E."/>
            <person name="Dhami P.D."/>
            <person name="Dockree C."/>
            <person name="Dodsworth S.J."/>
            <person name="Durbin R.M."/>
            <person name="Ellington A.G."/>
            <person name="Evans K.L."/>
            <person name="Fey J.M."/>
            <person name="Fleming K."/>
            <person name="French L."/>
            <person name="Garner A.A."/>
            <person name="Gilbert J.G.R."/>
            <person name="Goward M.E."/>
            <person name="Grafham D.V."/>
            <person name="Griffiths M.N.D."/>
            <person name="Hall C."/>
            <person name="Hall R.E."/>
            <person name="Hall-Tamlyn G."/>
            <person name="Heathcott R.W."/>
            <person name="Ho S."/>
            <person name="Holmes S."/>
            <person name="Hunt S.E."/>
            <person name="Jones M.C."/>
            <person name="Kershaw J."/>
            <person name="Kimberley A.M."/>
            <person name="King A."/>
            <person name="Laird G.K."/>
            <person name="Langford C.F."/>
            <person name="Leversha M.A."/>
            <person name="Lloyd C."/>
            <person name="Lloyd D.M."/>
            <person name="Martyn I.D."/>
            <person name="Mashreghi-Mohammadi M."/>
            <person name="Matthews L.H."/>
            <person name="Mccann O.T."/>
            <person name="Mcclay J."/>
            <person name="Mclaren S."/>
            <person name="McMurray A.A."/>
            <person name="Milne S.A."/>
            <person name="Mortimore B.J."/>
            <person name="Odell C.N."/>
            <person name="Pavitt R."/>
            <person name="Pearce A.V."/>
            <person name="Pearson D."/>
            <person name="Phillimore B.J.C.T."/>
            <person name="Phillips S.H."/>
            <person name="Plumb R.W."/>
            <person name="Ramsay H."/>
            <person name="Ramsey Y."/>
            <person name="Rogers L."/>
            <person name="Ross M.T."/>
            <person name="Scott C.E."/>
            <person name="Sehra H.K."/>
            <person name="Skuce C.D."/>
            <person name="Smalley S."/>
            <person name="Smith M.L."/>
            <person name="Soderlund C."/>
            <person name="Spragon L."/>
            <person name="Steward C.A."/>
            <person name="Sulston J.E."/>
            <person name="Swann R.M."/>
            <person name="Vaudin M."/>
            <person name="Wall M."/>
            <person name="Wallis J.M."/>
            <person name="Whiteley M.N."/>
            <person name="Willey D.L."/>
            <person name="Williams L."/>
            <person name="Williams S.A."/>
            <person name="Williamson H."/>
            <person name="Wilmer T.E."/>
            <person name="Wilming L."/>
            <person name="Wright C.L."/>
            <person name="Hubbard T."/>
            <person name="Bentley D.R."/>
            <person name="Beck S."/>
            <person name="Rogers J."/>
            <person name="Shimizu N."/>
            <person name="Minoshima S."/>
            <person name="Kawasaki K."/>
            <person name="Sasaki T."/>
            <person name="Asakawa S."/>
            <person name="Kudoh J."/>
            <person name="Shintani A."/>
            <person name="Shibuya K."/>
            <person name="Yoshizaki Y."/>
            <person name="Aoki N."/>
            <person name="Mitsuyama S."/>
            <person name="Roe B.A."/>
            <person name="Chen F."/>
            <person name="Chu L."/>
            <person name="Crabtree J."/>
            <person name="Deschamps S."/>
            <person name="Do A."/>
            <person name="Do T."/>
            <person name="Dorman A."/>
            <person name="Fang F."/>
            <person name="Fu Y."/>
            <person name="Hu P."/>
            <person name="Hua A."/>
            <person name="Kenton S."/>
            <person name="Lai H."/>
            <person name="Lao H.I."/>
            <person name="Lewis J."/>
            <person name="Lewis S."/>
            <person name="Lin S.-P."/>
            <person name="Loh P."/>
            <person name="Malaj E."/>
            <person name="Nguyen T."/>
            <person name="Pan H."/>
            <person name="Phan S."/>
            <person name="Qi S."/>
            <person name="Qian Y."/>
            <person name="Ray L."/>
            <person name="Ren Q."/>
            <person name="Shaull S."/>
            <person name="Sloan D."/>
            <person name="Song L."/>
            <person name="Wang Q."/>
            <person name="Wang Y."/>
            <person name="Wang Z."/>
            <person name="White J."/>
            <person name="Willingham D."/>
            <person name="Wu H."/>
            <person name="Yao Z."/>
            <person name="Zhan M."/>
            <person name="Zhang G."/>
            <person name="Chissoe S."/>
            <person name="Murray J."/>
            <person name="Miller N."/>
            <person name="Minx P."/>
            <person name="Fulton R."/>
            <person name="Johnson D."/>
            <person name="Bemis G."/>
            <person name="Bentley D."/>
            <person name="Bradshaw H."/>
            <person name="Bourne S."/>
            <person name="Cordes M."/>
            <person name="Du Z."/>
            <person name="Fulton L."/>
            <person name="Goela D."/>
            <person name="Graves T."/>
            <person name="Hawkins J."/>
            <person name="Hinds K."/>
            <person name="Kemp K."/>
            <person name="Latreille P."/>
            <person name="Layman D."/>
            <person name="Ozersky P."/>
            <person name="Rohlfing T."/>
            <person name="Scheet P."/>
            <person name="Walker C."/>
            <person name="Wamsley A."/>
            <person name="Wohldmann P."/>
            <person name="Pepin K."/>
            <person name="Nelson J."/>
            <person name="Korf I."/>
            <person name="Bedell J.A."/>
            <person name="Hillier L.W."/>
            <person name="Mardis E."/>
            <person name="Waterston R."/>
            <person name="Wilson R."/>
            <person name="Emanuel B.S."/>
            <person name="Shaikh T."/>
            <person name="Kurahashi H."/>
            <person name="Saitta S."/>
            <person name="Budarf M.L."/>
            <person name="McDermid H.E."/>
            <person name="Johnson A."/>
            <person name="Wong A.C.C."/>
            <person name="Morrow B.E."/>
            <person name="Edelmann L."/>
            <person name="Kim U.J."/>
            <person name="Shizuya H."/>
            <person name="Simon M.I."/>
            <person name="Dumanski J.P."/>
            <person name="Peyrard M."/>
            <person name="Kedra D."/>
            <person name="Seroussi E."/>
            <person name="Fransson I."/>
            <person name="Tapia I."/>
            <person name="Bruder C.E."/>
            <person name="O'Brien K.P."/>
            <person name="Wilkinson P."/>
            <person name="Bodenteich A."/>
            <person name="Hartman K."/>
            <person name="Hu X."/>
            <person name="Khan A.S."/>
            <person name="Lane L."/>
            <person name="Tilahun Y."/>
            <person name="Wright H."/>
        </authorList>
    </citation>
    <scope>NUCLEOTIDE SEQUENCE [LARGE SCALE GENOMIC DNA]</scope>
</reference>
<reference key="8">
    <citation type="journal article" date="2004" name="Genome Res.">
        <title>The status, quality, and expansion of the NIH full-length cDNA project: the Mammalian Gene Collection (MGC).</title>
        <authorList>
            <consortium name="The MGC Project Team"/>
        </authorList>
    </citation>
    <scope>NUCLEOTIDE SEQUENCE [LARGE SCALE MRNA] (ISOFORM 1)</scope>
</reference>
<reference key="9">
    <citation type="journal article" date="2007" name="BMC Genomics">
        <title>The full-ORF clone resource of the German cDNA consortium.</title>
        <authorList>
            <person name="Bechtel S."/>
            <person name="Rosenfelder H."/>
            <person name="Duda A."/>
            <person name="Schmidt C.P."/>
            <person name="Ernst U."/>
            <person name="Wellenreuther R."/>
            <person name="Mehrle A."/>
            <person name="Schuster C."/>
            <person name="Bahr A."/>
            <person name="Bloecker H."/>
            <person name="Heubner D."/>
            <person name="Hoerlein A."/>
            <person name="Michel G."/>
            <person name="Wedler H."/>
            <person name="Koehrer K."/>
            <person name="Ottenwaelder B."/>
            <person name="Poustka A."/>
            <person name="Wiemann S."/>
            <person name="Schupp I."/>
        </authorList>
    </citation>
    <scope>NUCLEOTIDE SEQUENCE [LARGE SCALE MRNA] OF 309-446</scope>
    <source>
        <tissue>Amygdala</tissue>
    </source>
</reference>
<reference key="10">
    <citation type="journal article" date="2004" name="Genome Biol.">
        <title>An unappreciated role for RNA surveillance.</title>
        <authorList>
            <person name="Hillman R.T."/>
            <person name="Green R.E."/>
            <person name="Brenner S.E."/>
        </authorList>
    </citation>
    <scope>SPLICE ISOFORM(S) THAT ARE POTENTIAL NMD TARGET(S)</scope>
</reference>
<reference key="11">
    <citation type="journal article" date="2011" name="J. Biol. Chem.">
        <title>Histone deacetylases 9 and 10 are required for homologous recombination.</title>
        <authorList>
            <person name="Kotian S."/>
            <person name="Liyanarachchi S."/>
            <person name="Zelent A."/>
            <person name="Parvin J.D."/>
        </authorList>
    </citation>
    <scope>FUNCTION</scope>
</reference>
<reference key="12">
    <citation type="journal article" date="2013" name="Proc. Natl. Acad. Sci. U.S.A.">
        <title>Histone deacetylase 10 promotes autophagy-mediated cell survival.</title>
        <authorList>
            <person name="Oehme I."/>
            <person name="Linke J.P."/>
            <person name="Boeck B.C."/>
            <person name="Milde T."/>
            <person name="Lodrini M."/>
            <person name="Hartenstein B."/>
            <person name="Wiegand I."/>
            <person name="Eckert C."/>
            <person name="Roth W."/>
            <person name="Kool M."/>
            <person name="Kaden S."/>
            <person name="Groene H.J."/>
            <person name="Schulte J.H."/>
            <person name="Lindner S."/>
            <person name="Hamacher-Brady A."/>
            <person name="Brady N.R."/>
            <person name="Deubzer H.E."/>
            <person name="Witt O."/>
        </authorList>
    </citation>
    <scope>FUNCTION</scope>
    <scope>INTERACTION WITH HSPA8</scope>
    <scope>SUBCELLULAR LOCATION</scope>
    <scope>MUTAGENESIS OF HIS-135</scope>
    <scope>INVOLVEMENT IN RESISTANCE TO CHEMOTHERAPEUTICS</scope>
</reference>
<reference key="13">
    <citation type="journal article" date="2014" name="J. Proteomics">
        <title>An enzyme assisted RP-RPLC approach for in-depth analysis of human liver phosphoproteome.</title>
        <authorList>
            <person name="Bian Y."/>
            <person name="Song C."/>
            <person name="Cheng K."/>
            <person name="Dong M."/>
            <person name="Wang F."/>
            <person name="Huang J."/>
            <person name="Sun D."/>
            <person name="Wang L."/>
            <person name="Ye M."/>
            <person name="Zou H."/>
        </authorList>
    </citation>
    <scope>PHOSPHORYLATION [LARGE SCALE ANALYSIS] AT SER-393</scope>
    <scope>IDENTIFICATION BY MASS SPECTROMETRY [LARGE SCALE ANALYSIS]</scope>
    <source>
        <tissue>Liver</tissue>
    </source>
</reference>
<reference key="14">
    <citation type="journal article" date="2015" name="J. Biol. Chem.">
        <title>Histone deacetylase 10 regulates DNA mismatch repair and may involve the deacetylation of MutS homolog 2.</title>
        <authorList>
            <person name="Radhakrishnan R."/>
            <person name="Li Y."/>
            <person name="Xiang S."/>
            <person name="Yuan F."/>
            <person name="Yuan Z."/>
            <person name="Telles E."/>
            <person name="Fang J."/>
            <person name="Coppola D."/>
            <person name="Shibata D."/>
            <person name="Lane W.S."/>
            <person name="Zhang Y."/>
            <person name="Zhang X."/>
            <person name="Seto E."/>
        </authorList>
    </citation>
    <scope>FUNCTION</scope>
    <scope>INTERACTION WITH MSH2</scope>
</reference>
<reference key="15">
    <citation type="journal article" date="2017" name="Nat. Commun.">
        <title>Histone deacetylase 10 structure and molecular function as a polyamine deacetylase.</title>
        <authorList>
            <person name="Hai Y."/>
            <person name="Shinsky S.A."/>
            <person name="Porter N.J."/>
            <person name="Christianson D.W."/>
        </authorList>
    </citation>
    <scope>FUNCTION</scope>
    <scope>CATALYTIC ACTIVITY</scope>
    <scope>BIOPHYSICOCHEMICAL PROPERTIES</scope>
</reference>
<reference key="16">
    <citation type="journal article" date="2018" name="Sci. Rep.">
        <title>Dual role of HDAC10 in lysosomal exocytosis and DNA repair promotes neuroblastoma chemoresistance.</title>
        <authorList>
            <person name="Ridinger J."/>
            <person name="Koeneke E."/>
            <person name="Kolbinger F.R."/>
            <person name="Koerholz K."/>
            <person name="Mahboobi S."/>
            <person name="Hellweg L."/>
            <person name="Gunkel N."/>
            <person name="Miller A.K."/>
            <person name="Peterziel H."/>
            <person name="Schmezer P."/>
            <person name="Hamacher-Brady A."/>
            <person name="Witt O."/>
            <person name="Oehme I."/>
        </authorList>
    </citation>
    <scope>FUNCTION</scope>
    <scope>INVOLVEMENT IN RESISTANCE TO CHEMOTHERAPEUTICS</scope>
</reference>
<sequence>MGTALVYHEDMTATRLLWDDPECEIERPERLTAALDRLRQRGLEQRCLRLSAREASEEELGLVHSPEYVSLVRETQVLGKEELQALSGQFDAIYFHPSTFHCARLAAGAGLQLVDAVLTGAVQNGLALVRPPGHHGQRAAANGFCVFNNVAIAAAHAKQKHGLHRILVVDWDVHHGQGIQYLFEDDPSVLYFSWHRYEHGRFWPFLRESDADAVGRGQGLGFTVNLPWNQVGMGNADYVAAFLHLLLPLAFEFDPELVLVSAGFDSAIGDPEGQMQATPECFAHLTQLLQVLAGGRVCAVLEGGYHLESLAESVCMTVQTLLGDPAPPLSGPMAPCQSALESIQSARAAQAPHWKSLQQQDVTAVPMSPSSHSPEGRPPPLLPGGPVCKAAASAPSSLLDQPCLCPAPSVRTAVALTTPDITLVLPPDVIQQEASALREETEAWARPHESLAREEALTALGKLLYLLDGMLDGQVNSGIAATPASAAAATLDVAVRRGLSHGAQRLLCVALGQLDRPPDLAHDGRSLWLNIRGKEAAALSMFHVSTPLPVMTGGFLSCILGLVLPLAYGFQPDLVLVALGPGHGLQGPHAALLAAMLRGLAGGRVLALLEENSTPQLAGILARVLNGEAPPSLGPSSVASPEDVQALMYLRGQLEPQWKMLQCHPHLVA</sequence>
<name>HDA10_HUMAN</name>
<keyword id="KW-0025">Alternative splicing</keyword>
<keyword id="KW-0072">Autophagy</keyword>
<keyword id="KW-0963">Cytoplasm</keyword>
<keyword id="KW-0227">DNA damage</keyword>
<keyword id="KW-0233">DNA recombination</keyword>
<keyword id="KW-0234">DNA repair</keyword>
<keyword id="KW-0378">Hydrolase</keyword>
<keyword id="KW-0479">Metal-binding</keyword>
<keyword id="KW-0539">Nucleus</keyword>
<keyword id="KW-0597">Phosphoprotein</keyword>
<keyword id="KW-1267">Proteomics identification</keyword>
<keyword id="KW-1185">Reference proteome</keyword>
<keyword id="KW-0862">Zinc</keyword>
<organism>
    <name type="scientific">Homo sapiens</name>
    <name type="common">Human</name>
    <dbReference type="NCBI Taxonomy" id="9606"/>
    <lineage>
        <taxon>Eukaryota</taxon>
        <taxon>Metazoa</taxon>
        <taxon>Chordata</taxon>
        <taxon>Craniata</taxon>
        <taxon>Vertebrata</taxon>
        <taxon>Euteleostomi</taxon>
        <taxon>Mammalia</taxon>
        <taxon>Eutheria</taxon>
        <taxon>Euarchontoglires</taxon>
        <taxon>Primates</taxon>
        <taxon>Haplorrhini</taxon>
        <taxon>Catarrhini</taxon>
        <taxon>Hominidae</taxon>
        <taxon>Homo</taxon>
    </lineage>
</organism>
<accession>Q969S8</accession>
<accession>Q08AP4</accession>
<accession>Q6STF9</accession>
<accession>Q96P77</accession>
<accession>Q96P78</accession>
<accession>Q9H028</accession>
<accession>Q9UGX1</accession>
<accession>Q9UGX2</accession>
<protein>
    <recommendedName>
        <fullName>Polyamine deacetylase HDAC10</fullName>
        <ecNumber evidence="10">3.5.1.48</ecNumber>
        <ecNumber evidence="10">3.5.1.62</ecNumber>
    </recommendedName>
    <alternativeName>
        <fullName>Histone deacetylase 10</fullName>
        <shortName>HD10</shortName>
    </alternativeName>
</protein>
<dbReference type="EC" id="3.5.1.48" evidence="10"/>
<dbReference type="EC" id="3.5.1.62" evidence="10"/>
<dbReference type="EMBL" id="AF426160">
    <property type="protein sequence ID" value="AAL30513.1"/>
    <property type="molecule type" value="mRNA"/>
</dbReference>
<dbReference type="EMBL" id="AF393962">
    <property type="protein sequence ID" value="AAK84023.1"/>
    <property type="molecule type" value="mRNA"/>
</dbReference>
<dbReference type="EMBL" id="AF407272">
    <property type="protein sequence ID" value="AAK92205.1"/>
    <property type="molecule type" value="mRNA"/>
</dbReference>
<dbReference type="EMBL" id="AF407273">
    <property type="protein sequence ID" value="AAK92206.1"/>
    <property type="molecule type" value="mRNA"/>
</dbReference>
<dbReference type="EMBL" id="CR456465">
    <property type="protein sequence ID" value="CAG30351.1"/>
    <property type="molecule type" value="mRNA"/>
</dbReference>
<dbReference type="EMBL" id="AY450395">
    <property type="protein sequence ID" value="AAS48345.1"/>
    <property type="molecule type" value="mRNA"/>
</dbReference>
<dbReference type="EMBL" id="AL022328">
    <property type="status" value="NOT_ANNOTATED_CDS"/>
    <property type="molecule type" value="Genomic_DNA"/>
</dbReference>
<dbReference type="EMBL" id="BC125083">
    <property type="protein sequence ID" value="AAI25084.1"/>
    <property type="molecule type" value="mRNA"/>
</dbReference>
<dbReference type="EMBL" id="AL512711">
    <property type="protein sequence ID" value="CAC21653.2"/>
    <property type="molecule type" value="mRNA"/>
</dbReference>
<dbReference type="CCDS" id="CCDS14088.1">
    <molecule id="Q969S8-1"/>
</dbReference>
<dbReference type="CCDS" id="CCDS54545.1">
    <molecule id="Q969S8-2"/>
</dbReference>
<dbReference type="RefSeq" id="NP_001152758.1">
    <molecule id="Q969S8-2"/>
    <property type="nucleotide sequence ID" value="NM_001159286.2"/>
</dbReference>
<dbReference type="RefSeq" id="NP_114408.3">
    <molecule id="Q969S8-1"/>
    <property type="nucleotide sequence ID" value="NM_032019.5"/>
</dbReference>
<dbReference type="SMR" id="Q969S8"/>
<dbReference type="BioGRID" id="123818">
    <property type="interactions" value="61"/>
</dbReference>
<dbReference type="CORUM" id="Q969S8"/>
<dbReference type="FunCoup" id="Q969S8">
    <property type="interactions" value="1901"/>
</dbReference>
<dbReference type="IntAct" id="Q969S8">
    <property type="interactions" value="31"/>
</dbReference>
<dbReference type="STRING" id="9606.ENSP00000216271"/>
<dbReference type="BindingDB" id="Q969S8"/>
<dbReference type="ChEMBL" id="CHEMBL5103"/>
<dbReference type="DrugBank" id="DB07553">
    <property type="generic name" value="9,9,9-TRIFLUORO-8-OXO-N-PHENYLNONANAMIDE"/>
</dbReference>
<dbReference type="DrugBank" id="DB12565">
    <property type="generic name" value="Abexinostat"/>
</dbReference>
<dbReference type="DrugBank" id="DB05015">
    <property type="generic name" value="Belinostat"/>
</dbReference>
<dbReference type="DrugBank" id="DB13346">
    <property type="generic name" value="Bufexamac"/>
</dbReference>
<dbReference type="DrugBank" id="DB01262">
    <property type="generic name" value="Decitabine"/>
</dbReference>
<dbReference type="DrugBank" id="DB11841">
    <property type="generic name" value="Entinostat"/>
</dbReference>
<dbReference type="DrugBank" id="DB12645">
    <property type="generic name" value="Givinostat"/>
</dbReference>
<dbReference type="DrugBank" id="DB06603">
    <property type="generic name" value="Panobinostat"/>
</dbReference>
<dbReference type="DrugBank" id="DB06819">
    <property type="generic name" value="Phenylbutyric acid"/>
</dbReference>
<dbReference type="DrugBank" id="DB03766">
    <property type="generic name" value="Propanoic acid"/>
</dbReference>
<dbReference type="DrugBank" id="DB12847">
    <property type="generic name" value="Pyroxamide"/>
</dbReference>
<dbReference type="DrugBank" id="DB06176">
    <property type="generic name" value="Romidepsin"/>
</dbReference>
<dbReference type="DrugBank" id="DB00313">
    <property type="generic name" value="Valproic acid"/>
</dbReference>
<dbReference type="DrugBank" id="DB02546">
    <property type="generic name" value="Vorinostat"/>
</dbReference>
<dbReference type="DrugCentral" id="Q969S8"/>
<dbReference type="GuidetoPHARMACOLOGY" id="2614"/>
<dbReference type="GlyGen" id="Q969S8">
    <property type="glycosylation" value="1 site"/>
</dbReference>
<dbReference type="iPTMnet" id="Q969S8"/>
<dbReference type="PhosphoSitePlus" id="Q969S8"/>
<dbReference type="BioMuta" id="HDAC10"/>
<dbReference type="DMDM" id="27734403"/>
<dbReference type="jPOST" id="Q969S8"/>
<dbReference type="MassIVE" id="Q969S8"/>
<dbReference type="PaxDb" id="9606-ENSP00000216271"/>
<dbReference type="PeptideAtlas" id="Q969S8"/>
<dbReference type="ProteomicsDB" id="75833">
    <molecule id="Q969S8-1"/>
</dbReference>
<dbReference type="ProteomicsDB" id="75834">
    <molecule id="Q969S8-2"/>
</dbReference>
<dbReference type="ProteomicsDB" id="75835">
    <molecule id="Q969S8-4"/>
</dbReference>
<dbReference type="ProteomicsDB" id="75836">
    <molecule id="Q969S8-5"/>
</dbReference>
<dbReference type="Pumba" id="Q969S8"/>
<dbReference type="Antibodypedia" id="14233">
    <property type="antibodies" value="523 antibodies from 37 providers"/>
</dbReference>
<dbReference type="DNASU" id="83933"/>
<dbReference type="Ensembl" id="ENST00000216271.10">
    <molecule id="Q969S8-1"/>
    <property type="protein sequence ID" value="ENSP00000216271.5"/>
    <property type="gene ID" value="ENSG00000100429.18"/>
</dbReference>
<dbReference type="Ensembl" id="ENST00000349505.4">
    <molecule id="Q969S8-2"/>
    <property type="protein sequence ID" value="ENSP00000343540.4"/>
    <property type="gene ID" value="ENSG00000100429.18"/>
</dbReference>
<dbReference type="Ensembl" id="ENST00000454936.5">
    <molecule id="Q969S8-5"/>
    <property type="protein sequence ID" value="ENSP00000406150.1"/>
    <property type="gene ID" value="ENSG00000100429.18"/>
</dbReference>
<dbReference type="GeneID" id="83933"/>
<dbReference type="KEGG" id="hsa:83933"/>
<dbReference type="MANE-Select" id="ENST00000216271.10">
    <property type="protein sequence ID" value="ENSP00000216271.5"/>
    <property type="RefSeq nucleotide sequence ID" value="NM_032019.6"/>
    <property type="RefSeq protein sequence ID" value="NP_114408.3"/>
</dbReference>
<dbReference type="UCSC" id="uc003bkg.4">
    <molecule id="Q969S8-1"/>
    <property type="organism name" value="human"/>
</dbReference>
<dbReference type="AGR" id="HGNC:18128"/>
<dbReference type="CTD" id="83933"/>
<dbReference type="DisGeNET" id="83933"/>
<dbReference type="GeneCards" id="HDAC10"/>
<dbReference type="HGNC" id="HGNC:18128">
    <property type="gene designation" value="HDAC10"/>
</dbReference>
<dbReference type="HPA" id="ENSG00000100429">
    <property type="expression patterns" value="Low tissue specificity"/>
</dbReference>
<dbReference type="MIM" id="608544">
    <property type="type" value="gene"/>
</dbReference>
<dbReference type="neXtProt" id="NX_Q969S8"/>
<dbReference type="OpenTargets" id="ENSG00000100429"/>
<dbReference type="PharmGKB" id="PA38297"/>
<dbReference type="VEuPathDB" id="HostDB:ENSG00000100429"/>
<dbReference type="eggNOG" id="KOG1343">
    <property type="taxonomic scope" value="Eukaryota"/>
</dbReference>
<dbReference type="GeneTree" id="ENSGT00940000160061"/>
<dbReference type="HOGENOM" id="CLU_007727_6_0_1"/>
<dbReference type="InParanoid" id="Q969S8"/>
<dbReference type="OMA" id="MAMMCVV"/>
<dbReference type="OrthoDB" id="424012at2759"/>
<dbReference type="PAN-GO" id="Q969S8">
    <property type="GO annotations" value="4 GO annotations based on evolutionary models"/>
</dbReference>
<dbReference type="PhylomeDB" id="Q969S8"/>
<dbReference type="TreeFam" id="TF106173"/>
<dbReference type="BRENDA" id="3.5.1.48">
    <property type="organism ID" value="2681"/>
</dbReference>
<dbReference type="BRENDA" id="3.5.1.98">
    <property type="organism ID" value="2681"/>
</dbReference>
<dbReference type="PathwayCommons" id="Q969S8"/>
<dbReference type="Reactome" id="R-HSA-2122947">
    <property type="pathway name" value="NOTCH1 Intracellular Domain Regulates Transcription"/>
</dbReference>
<dbReference type="Reactome" id="R-HSA-2644606">
    <property type="pathway name" value="Constitutive Signaling by NOTCH1 PEST Domain Mutants"/>
</dbReference>
<dbReference type="Reactome" id="R-HSA-2894862">
    <property type="pathway name" value="Constitutive Signaling by NOTCH1 HD+PEST Domain Mutants"/>
</dbReference>
<dbReference type="Reactome" id="R-HSA-3214815">
    <property type="pathway name" value="HDACs deacetylate histones"/>
</dbReference>
<dbReference type="Reactome" id="R-HSA-350054">
    <property type="pathway name" value="Notch-HLH transcription pathway"/>
</dbReference>
<dbReference type="SABIO-RK" id="Q969S8"/>
<dbReference type="SignaLink" id="Q969S8"/>
<dbReference type="SIGNOR" id="Q969S8"/>
<dbReference type="BioGRID-ORCS" id="83933">
    <property type="hits" value="3 hits in 1169 CRISPR screens"/>
</dbReference>
<dbReference type="ChiTaRS" id="HDAC10">
    <property type="organism name" value="human"/>
</dbReference>
<dbReference type="GeneWiki" id="HDAC10"/>
<dbReference type="GenomeRNAi" id="83933"/>
<dbReference type="Pharos" id="Q969S8">
    <property type="development level" value="Tclin"/>
</dbReference>
<dbReference type="PRO" id="PR:Q969S8"/>
<dbReference type="Proteomes" id="UP000005640">
    <property type="component" value="Chromosome 22"/>
</dbReference>
<dbReference type="RNAct" id="Q969S8">
    <property type="molecule type" value="protein"/>
</dbReference>
<dbReference type="Bgee" id="ENSG00000100429">
    <property type="expression patterns" value="Expressed in granulocyte and 119 other cell types or tissues"/>
</dbReference>
<dbReference type="ExpressionAtlas" id="Q969S8">
    <property type="expression patterns" value="baseline and differential"/>
</dbReference>
<dbReference type="GO" id="GO:0005737">
    <property type="term" value="C:cytoplasm"/>
    <property type="evidence" value="ECO:0000314"/>
    <property type="project" value="UniProtKB"/>
</dbReference>
<dbReference type="GO" id="GO:0005829">
    <property type="term" value="C:cytosol"/>
    <property type="evidence" value="ECO:0000314"/>
    <property type="project" value="HPA"/>
</dbReference>
<dbReference type="GO" id="GO:0000118">
    <property type="term" value="C:histone deacetylase complex"/>
    <property type="evidence" value="ECO:0000314"/>
    <property type="project" value="UniProtKB"/>
</dbReference>
<dbReference type="GO" id="GO:0043231">
    <property type="term" value="C:intracellular membrane-bounded organelle"/>
    <property type="evidence" value="ECO:0000314"/>
    <property type="project" value="HPA"/>
</dbReference>
<dbReference type="GO" id="GO:0005654">
    <property type="term" value="C:nucleoplasm"/>
    <property type="evidence" value="ECO:0000314"/>
    <property type="project" value="HPA"/>
</dbReference>
<dbReference type="GO" id="GO:0005634">
    <property type="term" value="C:nucleus"/>
    <property type="evidence" value="ECO:0000314"/>
    <property type="project" value="UniProtKB"/>
</dbReference>
<dbReference type="GO" id="GO:0047609">
    <property type="term" value="F:acetylputrescine deacetylase activity"/>
    <property type="evidence" value="ECO:0007669"/>
    <property type="project" value="UniProtKB-EC"/>
</dbReference>
<dbReference type="GO" id="GO:0047611">
    <property type="term" value="F:acetylspermidine deacetylase activity"/>
    <property type="evidence" value="ECO:0007669"/>
    <property type="project" value="UniProtKB-EC"/>
</dbReference>
<dbReference type="GO" id="GO:0019213">
    <property type="term" value="F:deacetylase activity"/>
    <property type="evidence" value="ECO:0000314"/>
    <property type="project" value="UniProtKB"/>
</dbReference>
<dbReference type="GO" id="GO:0019899">
    <property type="term" value="F:enzyme binding"/>
    <property type="evidence" value="ECO:0000353"/>
    <property type="project" value="UniProtKB"/>
</dbReference>
<dbReference type="GO" id="GO:0004407">
    <property type="term" value="F:histone deacetylase activity"/>
    <property type="evidence" value="ECO:0000314"/>
    <property type="project" value="UniProtKB"/>
</dbReference>
<dbReference type="GO" id="GO:0042826">
    <property type="term" value="F:histone deacetylase binding"/>
    <property type="evidence" value="ECO:0000314"/>
    <property type="project" value="UniProtKB"/>
</dbReference>
<dbReference type="GO" id="GO:0033558">
    <property type="term" value="F:protein lysine deacetylase activity"/>
    <property type="evidence" value="ECO:0000314"/>
    <property type="project" value="UniProtKB"/>
</dbReference>
<dbReference type="GO" id="GO:0008270">
    <property type="term" value="F:zinc ion binding"/>
    <property type="evidence" value="ECO:0000250"/>
    <property type="project" value="UniProtKB"/>
</dbReference>
<dbReference type="GO" id="GO:0006325">
    <property type="term" value="P:chromatin organization"/>
    <property type="evidence" value="ECO:0000303"/>
    <property type="project" value="UniProtKB"/>
</dbReference>
<dbReference type="GO" id="GO:0006281">
    <property type="term" value="P:DNA repair"/>
    <property type="evidence" value="ECO:0007669"/>
    <property type="project" value="UniProtKB-KW"/>
</dbReference>
<dbReference type="GO" id="GO:0040029">
    <property type="term" value="P:epigenetic regulation of gene expression"/>
    <property type="evidence" value="ECO:0000318"/>
    <property type="project" value="GO_Central"/>
</dbReference>
<dbReference type="GO" id="GO:0035825">
    <property type="term" value="P:homologous recombination"/>
    <property type="evidence" value="ECO:0000315"/>
    <property type="project" value="UniProtKB"/>
</dbReference>
<dbReference type="GO" id="GO:0016236">
    <property type="term" value="P:macroautophagy"/>
    <property type="evidence" value="ECO:0000315"/>
    <property type="project" value="UniProtKB"/>
</dbReference>
<dbReference type="GO" id="GO:0045892">
    <property type="term" value="P:negative regulation of DNA-templated transcription"/>
    <property type="evidence" value="ECO:0000314"/>
    <property type="project" value="UniProtKB"/>
</dbReference>
<dbReference type="GO" id="GO:0000122">
    <property type="term" value="P:negative regulation of transcription by RNA polymerase II"/>
    <property type="evidence" value="ECO:0000314"/>
    <property type="project" value="UniProtKB"/>
</dbReference>
<dbReference type="GO" id="GO:0106047">
    <property type="term" value="P:polyamine deacetylation"/>
    <property type="evidence" value="ECO:0000314"/>
    <property type="project" value="UniProtKB"/>
</dbReference>
<dbReference type="GO" id="GO:0032425">
    <property type="term" value="P:positive regulation of mismatch repair"/>
    <property type="evidence" value="ECO:0000314"/>
    <property type="project" value="UniProtKB"/>
</dbReference>
<dbReference type="GO" id="GO:0006355">
    <property type="term" value="P:regulation of DNA-templated transcription"/>
    <property type="evidence" value="ECO:0000314"/>
    <property type="project" value="UniProtKB"/>
</dbReference>
<dbReference type="GO" id="GO:0106048">
    <property type="term" value="P:spermidine deacetylation"/>
    <property type="evidence" value="ECO:0000314"/>
    <property type="project" value="UniProtKB"/>
</dbReference>
<dbReference type="CDD" id="cd11683">
    <property type="entry name" value="HDAC10"/>
    <property type="match status" value="1"/>
</dbReference>
<dbReference type="FunFam" id="3.40.800.20:FF:000005">
    <property type="entry name" value="histone deacetylase 6"/>
    <property type="match status" value="1"/>
</dbReference>
<dbReference type="Gene3D" id="3.40.800.20">
    <property type="entry name" value="Histone deacetylase domain"/>
    <property type="match status" value="1"/>
</dbReference>
<dbReference type="InterPro" id="IPR050284">
    <property type="entry name" value="HDAC_PDAC"/>
</dbReference>
<dbReference type="InterPro" id="IPR000286">
    <property type="entry name" value="His_deacetylse"/>
</dbReference>
<dbReference type="InterPro" id="IPR023801">
    <property type="entry name" value="His_deacetylse_dom"/>
</dbReference>
<dbReference type="InterPro" id="IPR037138">
    <property type="entry name" value="His_deacetylse_dom_sf"/>
</dbReference>
<dbReference type="InterPro" id="IPR023696">
    <property type="entry name" value="Ureohydrolase_dom_sf"/>
</dbReference>
<dbReference type="PANTHER" id="PTHR10625">
    <property type="entry name" value="HISTONE DEACETYLASE HDAC1-RELATED"/>
    <property type="match status" value="1"/>
</dbReference>
<dbReference type="PANTHER" id="PTHR10625:SF43">
    <property type="entry name" value="POLYAMINE DEACETYLASE HDAC10"/>
    <property type="match status" value="1"/>
</dbReference>
<dbReference type="Pfam" id="PF00850">
    <property type="entry name" value="Hist_deacetyl"/>
    <property type="match status" value="1"/>
</dbReference>
<dbReference type="PRINTS" id="PR01270">
    <property type="entry name" value="HDASUPER"/>
</dbReference>
<dbReference type="SUPFAM" id="SSF52768">
    <property type="entry name" value="Arginase/deacetylase"/>
    <property type="match status" value="2"/>
</dbReference>
<feature type="chain" id="PRO_0000114712" description="Polyamine deacetylase HDAC10">
    <location>
        <begin position="1"/>
        <end position="669"/>
    </location>
</feature>
<feature type="region of interest" description="Histone deacetylase">
    <location>
        <begin position="1"/>
        <end position="323"/>
    </location>
</feature>
<feature type="region of interest" description="Disordered" evidence="2">
    <location>
        <begin position="361"/>
        <end position="387"/>
    </location>
</feature>
<feature type="short sequence motif" description="Substrate specificity" evidence="1">
    <location>
        <begin position="21"/>
        <end position="24"/>
    </location>
</feature>
<feature type="compositionally biased region" description="Polar residues" evidence="2">
    <location>
        <begin position="361"/>
        <end position="373"/>
    </location>
</feature>
<feature type="active site" description="Proton donor/acceptor" evidence="1">
    <location>
        <position position="135"/>
    </location>
</feature>
<feature type="binding site" evidence="1">
    <location>
        <position position="20"/>
    </location>
    <ligand>
        <name>substrate</name>
    </ligand>
</feature>
<feature type="binding site" evidence="1">
    <location>
        <position position="172"/>
    </location>
    <ligand>
        <name>Zn(2+)</name>
        <dbReference type="ChEBI" id="CHEBI:29105"/>
    </ligand>
</feature>
<feature type="binding site" evidence="1">
    <location>
        <position position="174"/>
    </location>
    <ligand>
        <name>Zn(2+)</name>
        <dbReference type="ChEBI" id="CHEBI:29105"/>
    </ligand>
</feature>
<feature type="binding site" evidence="1">
    <location>
        <position position="265"/>
    </location>
    <ligand>
        <name>Zn(2+)</name>
        <dbReference type="ChEBI" id="CHEBI:29105"/>
    </ligand>
</feature>
<feature type="binding site" evidence="1">
    <location>
        <position position="305"/>
    </location>
    <ligand>
        <name>substrate</name>
    </ligand>
</feature>
<feature type="site" description="Substrate specificity" evidence="1">
    <location>
        <position position="272"/>
    </location>
</feature>
<feature type="modified residue" description="Phosphoserine" evidence="18">
    <location>
        <position position="393"/>
    </location>
</feature>
<feature type="splice variant" id="VSP_014698" description="In isoform 5." evidence="16">
    <location>
        <begin position="252"/>
        <end position="301"/>
    </location>
</feature>
<feature type="splice variant" id="VSP_002089" description="In isoform 2." evidence="12">
    <location>
        <begin position="252"/>
        <end position="271"/>
    </location>
</feature>
<feature type="splice variant" id="VSP_014699" description="In isoform 5." evidence="16">
    <location>
        <begin position="447"/>
        <end position="669"/>
    </location>
</feature>
<feature type="splice variant" id="VSP_002090" description="In isoform 4." evidence="12 13">
    <original>NSTPQLAGILARVLNGEAPPSLGPSSVASPEDVQALMYLRGQLEPQWKMLQCHPHLVA</original>
    <variation>VSWAGWRCCGVGRGKGPVTASVFAPGPELHTPASRDPGPGAEWRGTS</variation>
    <location>
        <begin position="612"/>
        <end position="669"/>
    </location>
</feature>
<feature type="sequence variant" id="VAR_049356" description="In dbSNP:rs34402301.">
    <original>V</original>
    <variation>I</variation>
    <location>
        <position position="429"/>
    </location>
</feature>
<feature type="mutagenesis site" description="Abolishes deacetylase activity. Does not affect interaction with HDAC3. Loss of autophagy regulation." evidence="4 6 8">
    <original>H</original>
    <variation>A</variation>
    <location>
        <position position="135"/>
    </location>
</feature>
<feature type="sequence conflict" description="In Ref. 6; AAS48345." evidence="17" ref="6">
    <original>A</original>
    <variation>T</variation>
    <location>
        <position position="92"/>
    </location>
</feature>
<feature type="sequence conflict" description="In Ref. 6; AAS48345." evidence="17" ref="6">
    <original>Q</original>
    <variation>R</variation>
    <location>
        <position position="177"/>
    </location>
</feature>
<feature type="sequence conflict" description="In Ref. 9; CAC21653." evidence="17" ref="9">
    <original>Q</original>
    <variation>QRC</variation>
    <location>
        <position position="337"/>
    </location>
</feature>
<feature type="sequence conflict" description="In Ref. 4; no nucleotide entry." evidence="17" ref="4">
    <original>Q</original>
    <variation>QRCEG</variation>
    <location>
        <position position="337"/>
    </location>
</feature>
<feature type="sequence conflict" description="In Ref. 3; AAK92205/AAK92206." evidence="17" ref="3">
    <original>A</original>
    <variation>T</variation>
    <location>
        <position position="594"/>
    </location>
</feature>
<comment type="function">
    <text evidence="3 4 5 6 7 8 9 10 11">Polyamine deacetylase (PDAC), which acts preferentially on N(8)-acetylspermidine, and also on acetylcadaverine and acetylputrescine (PubMed:28516954). Exhibits attenuated catalytic activity toward N(1),N(8)-diacetylspermidine and very low activity, if any, toward N(1)-acetylspermidine (PubMed:28516954). Histone deacetylase activity has been observed in vitro (PubMed:11677242, PubMed:11726666, PubMed:11739383, PubMed:11861901). Has also been shown to be involved in MSH2 deacetylation (PubMed:26221039). The physiological relevance of protein/histone deacetylase activity is unclear and could be very weak (PubMed:28516954). May play a role in the promotion of late stages of autophagy, possibly autophagosome-lysosome fusion and/or lysosomal exocytosis in neuroblastoma cells (PubMed:23801752, PubMed:29968769). May play a role in homologous recombination (PubMed:21247901). May promote DNA mismatch repair (PubMed:26221039).</text>
</comment>
<comment type="catalytic activity">
    <reaction evidence="10">
        <text>N(8)-acetylspermidine + H2O = spermidine + acetate</text>
        <dbReference type="Rhea" id="RHEA:23928"/>
        <dbReference type="ChEBI" id="CHEBI:15377"/>
        <dbReference type="ChEBI" id="CHEBI:30089"/>
        <dbReference type="ChEBI" id="CHEBI:57834"/>
        <dbReference type="ChEBI" id="CHEBI:58535"/>
        <dbReference type="EC" id="3.5.1.48"/>
    </reaction>
</comment>
<comment type="catalytic activity">
    <reaction evidence="10">
        <text>N-acetylputrescine + H2O = putrescine + acetate</text>
        <dbReference type="Rhea" id="RHEA:23412"/>
        <dbReference type="ChEBI" id="CHEBI:15377"/>
        <dbReference type="ChEBI" id="CHEBI:30089"/>
        <dbReference type="ChEBI" id="CHEBI:58263"/>
        <dbReference type="ChEBI" id="CHEBI:326268"/>
        <dbReference type="EC" id="3.5.1.62"/>
    </reaction>
</comment>
<comment type="catalytic activity">
    <reaction evidence="10">
        <text>N-acetylcadaverine + H2O = cadaverine + acetate</text>
        <dbReference type="Rhea" id="RHEA:51892"/>
        <dbReference type="ChEBI" id="CHEBI:15377"/>
        <dbReference type="ChEBI" id="CHEBI:30089"/>
        <dbReference type="ChEBI" id="CHEBI:58384"/>
        <dbReference type="ChEBI" id="CHEBI:134408"/>
    </reaction>
</comment>
<comment type="catalytic activity">
    <reaction evidence="3 4 5 6 9">
        <text>N(6)-acetyl-L-lysyl-[protein] + H2O = L-lysyl-[protein] + acetate</text>
        <dbReference type="Rhea" id="RHEA:58108"/>
        <dbReference type="Rhea" id="RHEA-COMP:9752"/>
        <dbReference type="Rhea" id="RHEA-COMP:10731"/>
        <dbReference type="ChEBI" id="CHEBI:15377"/>
        <dbReference type="ChEBI" id="CHEBI:29969"/>
        <dbReference type="ChEBI" id="CHEBI:30089"/>
        <dbReference type="ChEBI" id="CHEBI:61930"/>
    </reaction>
</comment>
<comment type="biophysicochemical properties">
    <kinetics>
        <KM evidence="10">110 uM for acetylcadaverine</KM>
        <KM evidence="10">170 uM for acetylputrescine</KM>
        <KM evidence="10">100 uM for N(8)-acetylspermidine</KM>
        <KM evidence="10">180 uM for N(1)-acetylspermine</KM>
        <KM evidence="10">150 uM for N(1),N(8)-diacetylspermidine</KM>
    </kinetics>
</comment>
<comment type="subunit">
    <text evidence="5 6 8 9">Interacts with HDAC3 (PubMed:11861901). Interacts with HDAC2 and NCOR2/SMRT (PubMed:11739383). Interacts with HSPA8/HSC70 (PubMed:23801752). Interacts with MSH2 (PubMed:26221039).</text>
</comment>
<comment type="interaction">
    <interactant intactId="EBI-301762">
        <id>Q969S8</id>
    </interactant>
    <interactant intactId="EBI-21535880">
        <id>Q92870-2</id>
        <label>APBB2</label>
    </interactant>
    <organismsDiffer>false</organismsDiffer>
    <experiments>3</experiments>
</comment>
<comment type="interaction">
    <interactant intactId="EBI-301762">
        <id>Q969S8</id>
    </interactant>
    <interactant intactId="EBI-946046">
        <id>P54252</id>
        <label>ATXN3</label>
    </interactant>
    <organismsDiffer>false</organismsDiffer>
    <experiments>3</experiments>
</comment>
<comment type="interaction">
    <interactant intactId="EBI-301762">
        <id>Q969S8</id>
    </interactant>
    <interactant intactId="EBI-466029">
        <id>P42858</id>
        <label>HTT</label>
    </interactant>
    <organismsDiffer>false</organismsDiffer>
    <experiments>21</experiments>
</comment>
<comment type="interaction">
    <interactant intactId="EBI-301762">
        <id>Q969S8</id>
    </interactant>
    <interactant intactId="EBI-748974">
        <id>Q96CV9</id>
        <label>OPTN</label>
    </interactant>
    <organismsDiffer>false</organismsDiffer>
    <experiments>3</experiments>
</comment>
<comment type="interaction">
    <interactant intactId="EBI-301762">
        <id>Q969S8</id>
    </interactant>
    <interactant intactId="EBI-752057">
        <id>Q7Z412</id>
        <label>PEX26</label>
    </interactant>
    <organismsDiffer>false</organismsDiffer>
    <experiments>3</experiments>
</comment>
<comment type="interaction">
    <interactant intactId="EBI-301762">
        <id>Q969S8</id>
    </interactant>
    <interactant intactId="EBI-50433196">
        <id>A0A6Q8PF08</id>
        <label>PMP22</label>
    </interactant>
    <organismsDiffer>false</organismsDiffer>
    <experiments>3</experiments>
</comment>
<comment type="interaction">
    <interactant intactId="EBI-301762">
        <id>Q969S8</id>
    </interactant>
    <interactant intactId="EBI-985879">
        <id>P37840</id>
        <label>SNCA</label>
    </interactant>
    <organismsDiffer>false</organismsDiffer>
    <experiments>3</experiments>
</comment>
<comment type="interaction">
    <interactant intactId="EBI-301762">
        <id>Q969S8</id>
    </interactant>
    <interactant intactId="EBI-2130429">
        <id>Q9BYV2</id>
        <label>TRIM54</label>
    </interactant>
    <organismsDiffer>false</organismsDiffer>
    <experiments>2</experiments>
</comment>
<comment type="subcellular location">
    <subcellularLocation>
        <location evidence="3 4 5 6 8">Cytoplasm</location>
    </subcellularLocation>
    <subcellularLocation>
        <location evidence="3 4 5 6">Nucleus</location>
    </subcellularLocation>
    <text evidence="4">Excluded from nucleoli.</text>
</comment>
<comment type="alternative products">
    <event type="alternative splicing"/>
    <isoform>
        <id>Q969S8-1</id>
        <name>1</name>
        <name evidence="12">Alpha</name>
        <name evidence="13">HDAC10b</name>
        <name evidence="14">HDAC10v1</name>
        <sequence type="displayed"/>
    </isoform>
    <isoform>
        <id>Q969S8-2</id>
        <name>2</name>
        <name evidence="12">Beta</name>
        <sequence type="described" ref="VSP_002089"/>
    </isoform>
    <isoform>
        <id>Q969S8-4</id>
        <name>4</name>
        <name>A</name>
        <name evidence="14">HDAC10v2</name>
        <sequence type="described" ref="VSP_002090"/>
    </isoform>
    <isoform>
        <id>Q969S8-5</id>
        <name>5</name>
        <sequence type="described" ref="VSP_014698 VSP_014699"/>
    </isoform>
</comment>
<comment type="tissue specificity">
    <text evidence="3 5 6">Widely expressed with high levels in liver and kidney.</text>
</comment>
<comment type="disease">
    <text evidence="8 11 15">In neuroblastoma cells, may promote autophagy in response to chemotherapy-induced DNA damage and efflux of chemotherapeutics via lysosomal exocytosis, hence protecting cells from cytotoxic agents (PubMed:23801752, PubMed:29968769). Expression levels may correlate with survival in neuroblastoma patients, with low levels in the tumor correlating with long-term patient survival and high expression with poor prognosis (PubMed:23801752). Therefore has been proposed as a biomarker to predict neuroblastoma chemoresistance and treatment outcome (PubMed:23801752).</text>
</comment>
<comment type="miscellaneous">
    <text evidence="6">Like some other members of the HD type 2 subfamily, such as HDAC4, inhibited by the antitumor drug trichostatin A (TSA).</text>
</comment>
<comment type="miscellaneous">
    <molecule>Isoform 4</molecule>
    <text evidence="17">May be produced at very low levels due to a premature stop codon in the mRNA, leading to nonsense-mediated mRNA decay.</text>
</comment>
<comment type="similarity">
    <text evidence="17">Belongs to the histone deacetylase family. HD type 2 subfamily.</text>
</comment>
<comment type="caution">
    <text evidence="3 4 5 6 9 10">Protein/histone deacetylase activity in vivo is uncertain. The 3D structure analysis of the zebrafish ortholog shows that a glutamate gatekeeper and a sterically constricted active site confer specificity for N(8)-acetylspermidine hydrolysis and disfavour acetyllysine hydrolysis. Supporting this observation, has been shown to exhibit only very low activity, if any, towards acetyl-lysine peptide substrates (PubMed:28516954). However, histone deacetylase activity has been observed in vitro (PubMed:11677242, PubMed:11726666, PubMed:11739383, PubMed:11861901, PubMed:28516954). Has also been shown to be involved in MSH2 deacetylation (PubMed:26221039).</text>
</comment>
<gene>
    <name type="primary">HDAC10</name>
</gene>
<evidence type="ECO:0000250" key="1">
    <source>
        <dbReference type="UniProtKB" id="F1QCV2"/>
    </source>
</evidence>
<evidence type="ECO:0000256" key="2">
    <source>
        <dbReference type="SAM" id="MobiDB-lite"/>
    </source>
</evidence>
<evidence type="ECO:0000269" key="3">
    <source>
    </source>
</evidence>
<evidence type="ECO:0000269" key="4">
    <source>
    </source>
</evidence>
<evidence type="ECO:0000269" key="5">
    <source>
    </source>
</evidence>
<evidence type="ECO:0000269" key="6">
    <source>
    </source>
</evidence>
<evidence type="ECO:0000269" key="7">
    <source>
    </source>
</evidence>
<evidence type="ECO:0000269" key="8">
    <source>
    </source>
</evidence>
<evidence type="ECO:0000269" key="9">
    <source>
    </source>
</evidence>
<evidence type="ECO:0000269" key="10">
    <source>
    </source>
</evidence>
<evidence type="ECO:0000269" key="11">
    <source>
    </source>
</evidence>
<evidence type="ECO:0000303" key="12">
    <source>
    </source>
</evidence>
<evidence type="ECO:0000303" key="13">
    <source>
    </source>
</evidence>
<evidence type="ECO:0000303" key="14">
    <source>
    </source>
</evidence>
<evidence type="ECO:0000303" key="15">
    <source>
    </source>
</evidence>
<evidence type="ECO:0000303" key="16">
    <source ref="6"/>
</evidence>
<evidence type="ECO:0000305" key="17"/>
<evidence type="ECO:0007744" key="18">
    <source>
    </source>
</evidence>
<proteinExistence type="evidence at protein level"/>